<gene>
    <name type="primary">LEU2</name>
    <name type="synonym">3-IMDH</name>
</gene>
<comment type="function">
    <text>Catalyzes the oxidation of 3-carboxy-2-hydroxy-4-methylpentanoate (3-isopropylmalate) to 3-carboxy-4-methyl-2-oxopentanoate. The product decarboxylates to 4-methyl-2 oxopentanoate.</text>
</comment>
<comment type="catalytic activity">
    <reaction>
        <text>(2R,3S)-3-isopropylmalate + NAD(+) = 4-methyl-2-oxopentanoate + CO2 + NADH</text>
        <dbReference type="Rhea" id="RHEA:32271"/>
        <dbReference type="ChEBI" id="CHEBI:16526"/>
        <dbReference type="ChEBI" id="CHEBI:17865"/>
        <dbReference type="ChEBI" id="CHEBI:35121"/>
        <dbReference type="ChEBI" id="CHEBI:57540"/>
        <dbReference type="ChEBI" id="CHEBI:57945"/>
        <dbReference type="EC" id="1.1.1.85"/>
    </reaction>
</comment>
<comment type="cofactor">
    <cofactor evidence="1">
        <name>Mg(2+)</name>
        <dbReference type="ChEBI" id="CHEBI:18420"/>
    </cofactor>
    <cofactor evidence="1">
        <name>Mn(2+)</name>
        <dbReference type="ChEBI" id="CHEBI:29035"/>
    </cofactor>
    <text evidence="1">Binds 1 Mg(2+) or Mn(2+) ion per subunit.</text>
</comment>
<comment type="pathway">
    <text>Amino-acid biosynthesis; L-leucine biosynthesis; L-leucine from 3-methyl-2-oxobutanoate: step 3/4.</text>
</comment>
<comment type="subunit">
    <text evidence="1">Homodimer.</text>
</comment>
<comment type="subcellular location">
    <subcellularLocation>
        <location>Cytoplasm</location>
    </subcellularLocation>
</comment>
<comment type="similarity">
    <text evidence="2">Belongs to the isocitrate and isopropylmalate dehydrogenases family.</text>
</comment>
<dbReference type="EC" id="1.1.1.85"/>
<dbReference type="EMBL" id="M16014">
    <property type="protein sequence ID" value="AAA34347.1"/>
    <property type="molecule type" value="Genomic_DNA"/>
</dbReference>
<dbReference type="PIR" id="A47620">
    <property type="entry name" value="A47620"/>
</dbReference>
<dbReference type="SMR" id="P08791"/>
<dbReference type="BRENDA" id="1.1.1.85">
    <property type="organism ID" value="1148"/>
</dbReference>
<dbReference type="UniPathway" id="UPA00048">
    <property type="reaction ID" value="UER00072"/>
</dbReference>
<dbReference type="GO" id="GO:0005829">
    <property type="term" value="C:cytosol"/>
    <property type="evidence" value="ECO:0007669"/>
    <property type="project" value="TreeGrafter"/>
</dbReference>
<dbReference type="GO" id="GO:0003862">
    <property type="term" value="F:3-isopropylmalate dehydrogenase activity"/>
    <property type="evidence" value="ECO:0007669"/>
    <property type="project" value="UniProtKB-EC"/>
</dbReference>
<dbReference type="GO" id="GO:0000287">
    <property type="term" value="F:magnesium ion binding"/>
    <property type="evidence" value="ECO:0007669"/>
    <property type="project" value="InterPro"/>
</dbReference>
<dbReference type="GO" id="GO:0051287">
    <property type="term" value="F:NAD binding"/>
    <property type="evidence" value="ECO:0007669"/>
    <property type="project" value="InterPro"/>
</dbReference>
<dbReference type="GO" id="GO:0009098">
    <property type="term" value="P:L-leucine biosynthetic process"/>
    <property type="evidence" value="ECO:0007669"/>
    <property type="project" value="UniProtKB-UniPathway"/>
</dbReference>
<dbReference type="FunFam" id="3.40.718.10:FF:000006">
    <property type="entry name" value="3-isopropylmalate dehydrogenase"/>
    <property type="match status" value="1"/>
</dbReference>
<dbReference type="Gene3D" id="3.40.718.10">
    <property type="entry name" value="Isopropylmalate Dehydrogenase"/>
    <property type="match status" value="1"/>
</dbReference>
<dbReference type="InterPro" id="IPR019818">
    <property type="entry name" value="IsoCit/isopropylmalate_DH_CS"/>
</dbReference>
<dbReference type="InterPro" id="IPR024084">
    <property type="entry name" value="IsoPropMal-DH-like_dom"/>
</dbReference>
<dbReference type="InterPro" id="IPR004429">
    <property type="entry name" value="Isopropylmalate_DH"/>
</dbReference>
<dbReference type="NCBIfam" id="TIGR00169">
    <property type="entry name" value="leuB"/>
    <property type="match status" value="1"/>
</dbReference>
<dbReference type="PANTHER" id="PTHR42979">
    <property type="entry name" value="3-ISOPROPYLMALATE DEHYDROGENASE"/>
    <property type="match status" value="1"/>
</dbReference>
<dbReference type="PANTHER" id="PTHR42979:SF1">
    <property type="entry name" value="3-ISOPROPYLMALATE DEHYDROGENASE"/>
    <property type="match status" value="1"/>
</dbReference>
<dbReference type="Pfam" id="PF00180">
    <property type="entry name" value="Iso_dh"/>
    <property type="match status" value="1"/>
</dbReference>
<dbReference type="SMART" id="SM01329">
    <property type="entry name" value="Iso_dh"/>
    <property type="match status" value="1"/>
</dbReference>
<dbReference type="SUPFAM" id="SSF53659">
    <property type="entry name" value="Isocitrate/Isopropylmalate dehydrogenase-like"/>
    <property type="match status" value="1"/>
</dbReference>
<dbReference type="PROSITE" id="PS00470">
    <property type="entry name" value="IDH_IMDH"/>
    <property type="match status" value="1"/>
</dbReference>
<reference key="1">
    <citation type="journal article" date="1987" name="J. Gen. Microbiol.">
        <title>Molecular cloning and nucleotide sequence of the 3-isopropylmalate dehydrogenase gene of Candida utilis.</title>
        <authorList>
            <person name="Hamasawa K."/>
            <person name="Kobayashi Y."/>
            <person name="Harada S."/>
            <person name="Yoda K."/>
            <person name="Yamasaki M."/>
            <person name="Tamura G."/>
        </authorList>
    </citation>
    <scope>NUCLEOTIDE SEQUENCE [GENOMIC DNA]</scope>
</reference>
<name>LEU3_CYBJA</name>
<feature type="chain" id="PRO_0000083616" description="3-isopropylmalate dehydrogenase">
    <location>
        <begin position="1"/>
        <end position="363"/>
    </location>
</feature>
<feature type="binding site" evidence="1">
    <location>
        <begin position="78"/>
        <end position="89"/>
    </location>
    <ligand>
        <name>NAD(+)</name>
        <dbReference type="ChEBI" id="CHEBI:57540"/>
    </ligand>
</feature>
<feature type="binding site" evidence="1">
    <location>
        <position position="96"/>
    </location>
    <ligand>
        <name>substrate</name>
    </ligand>
</feature>
<feature type="binding site" evidence="1">
    <location>
        <position position="106"/>
    </location>
    <ligand>
        <name>substrate</name>
    </ligand>
</feature>
<feature type="binding site" evidence="1">
    <location>
        <position position="135"/>
    </location>
    <ligand>
        <name>substrate</name>
    </ligand>
</feature>
<feature type="binding site" evidence="1">
    <location>
        <position position="224"/>
    </location>
    <ligand>
        <name>Mg(2+)</name>
        <dbReference type="ChEBI" id="CHEBI:18420"/>
    </ligand>
</feature>
<feature type="binding site" evidence="1">
    <location>
        <position position="224"/>
    </location>
    <ligand>
        <name>substrate</name>
    </ligand>
</feature>
<feature type="binding site" evidence="1">
    <location>
        <position position="249"/>
    </location>
    <ligand>
        <name>Mg(2+)</name>
        <dbReference type="ChEBI" id="CHEBI:18420"/>
    </ligand>
</feature>
<feature type="binding site" evidence="1">
    <location>
        <position position="253"/>
    </location>
    <ligand>
        <name>Mg(2+)</name>
        <dbReference type="ChEBI" id="CHEBI:18420"/>
    </ligand>
</feature>
<feature type="binding site" evidence="1">
    <location>
        <begin position="288"/>
        <end position="299"/>
    </location>
    <ligand>
        <name>NAD(+)</name>
        <dbReference type="ChEBI" id="CHEBI:57540"/>
    </ligand>
</feature>
<feature type="site" description="Important for catalysis" evidence="1">
    <location>
        <position position="142"/>
    </location>
</feature>
<feature type="site" description="Important for catalysis" evidence="1">
    <location>
        <position position="191"/>
    </location>
</feature>
<evidence type="ECO:0000250" key="1"/>
<evidence type="ECO:0000305" key="2"/>
<keyword id="KW-0028">Amino-acid biosynthesis</keyword>
<keyword id="KW-0100">Branched-chain amino acid biosynthesis</keyword>
<keyword id="KW-0963">Cytoplasm</keyword>
<keyword id="KW-0432">Leucine biosynthesis</keyword>
<keyword id="KW-0460">Magnesium</keyword>
<keyword id="KW-0464">Manganese</keyword>
<keyword id="KW-0479">Metal-binding</keyword>
<keyword id="KW-0520">NAD</keyword>
<keyword id="KW-0560">Oxidoreductase</keyword>
<protein>
    <recommendedName>
        <fullName>3-isopropylmalate dehydrogenase</fullName>
        <shortName>3-IPM-DH</shortName>
        <shortName>IMDH</shortName>
        <ecNumber>1.1.1.85</ecNumber>
    </recommendedName>
    <alternativeName>
        <fullName>Beta-IPM dehydrogenase</fullName>
    </alternativeName>
</protein>
<proteinExistence type="inferred from homology"/>
<organism>
    <name type="scientific">Cyberlindnera jadinii</name>
    <name type="common">Torula yeast</name>
    <name type="synonym">Pichia jadinii</name>
    <dbReference type="NCBI Taxonomy" id="4903"/>
    <lineage>
        <taxon>Eukaryota</taxon>
        <taxon>Fungi</taxon>
        <taxon>Dikarya</taxon>
        <taxon>Ascomycota</taxon>
        <taxon>Saccharomycotina</taxon>
        <taxon>Saccharomycetes</taxon>
        <taxon>Phaffomycetales</taxon>
        <taxon>Phaffomycetaceae</taxon>
        <taxon>Cyberlindnera</taxon>
    </lineage>
</organism>
<sequence length="363" mass="38706">MPEKTIVVLPGDHVGTEITAEAIKVLKAIEEVKPEIKFNFQHHLIGGAAIDATGVPLPDDALEASKKADAVLLGAVGGPKWGTGAVRPEQGLLKIRKELNLYANLRPCNFASESLLDLSPIKAEVVKGTDFVVVRELVGGIYFGERKEDDGSGVASDTETYSVPEVQRITRMAAFMALQHNPPLPIWSLDKANVLASSRLWRKVVTETIEKEFPQLTVQHQLIDSAAMILIKYPTQLNGIVITSNMFGDIISDEASVIPGSLGLLPSASLASLPDSNKAFGLYEPCHGSAPDLPANKVNPIATILSAAMMLKLSLDLYEEGVAVETAVKQVLDAGIRTGDLKGTNSTTEVGDAVAEAVKKILA</sequence>
<accession>P08791</accession>